<proteinExistence type="inferred from homology"/>
<protein>
    <recommendedName>
        <fullName evidence="1">Small ribosomal subunit protein uS3</fullName>
    </recommendedName>
    <alternativeName>
        <fullName evidence="2">30S ribosomal protein S3</fullName>
    </alternativeName>
</protein>
<organism>
    <name type="scientific">Streptococcus uberis (strain ATCC BAA-854 / 0140J)</name>
    <dbReference type="NCBI Taxonomy" id="218495"/>
    <lineage>
        <taxon>Bacteria</taxon>
        <taxon>Bacillati</taxon>
        <taxon>Bacillota</taxon>
        <taxon>Bacilli</taxon>
        <taxon>Lactobacillales</taxon>
        <taxon>Streptococcaceae</taxon>
        <taxon>Streptococcus</taxon>
    </lineage>
</organism>
<dbReference type="EMBL" id="AM946015">
    <property type="protein sequence ID" value="CAR40449.1"/>
    <property type="molecule type" value="Genomic_DNA"/>
</dbReference>
<dbReference type="RefSeq" id="WP_012657638.1">
    <property type="nucleotide sequence ID" value="NC_012004.1"/>
</dbReference>
<dbReference type="SMR" id="B9DSV6"/>
<dbReference type="STRING" id="218495.SUB0074"/>
<dbReference type="GeneID" id="93825300"/>
<dbReference type="KEGG" id="sub:SUB0074"/>
<dbReference type="eggNOG" id="COG0092">
    <property type="taxonomic scope" value="Bacteria"/>
</dbReference>
<dbReference type="HOGENOM" id="CLU_058591_0_2_9"/>
<dbReference type="OrthoDB" id="9806396at2"/>
<dbReference type="Proteomes" id="UP000000449">
    <property type="component" value="Chromosome"/>
</dbReference>
<dbReference type="GO" id="GO:0022627">
    <property type="term" value="C:cytosolic small ribosomal subunit"/>
    <property type="evidence" value="ECO:0007669"/>
    <property type="project" value="TreeGrafter"/>
</dbReference>
<dbReference type="GO" id="GO:0003729">
    <property type="term" value="F:mRNA binding"/>
    <property type="evidence" value="ECO:0007669"/>
    <property type="project" value="UniProtKB-UniRule"/>
</dbReference>
<dbReference type="GO" id="GO:0019843">
    <property type="term" value="F:rRNA binding"/>
    <property type="evidence" value="ECO:0007669"/>
    <property type="project" value="UniProtKB-UniRule"/>
</dbReference>
<dbReference type="GO" id="GO:0003735">
    <property type="term" value="F:structural constituent of ribosome"/>
    <property type="evidence" value="ECO:0007669"/>
    <property type="project" value="InterPro"/>
</dbReference>
<dbReference type="GO" id="GO:0006412">
    <property type="term" value="P:translation"/>
    <property type="evidence" value="ECO:0007669"/>
    <property type="project" value="UniProtKB-UniRule"/>
</dbReference>
<dbReference type="CDD" id="cd02412">
    <property type="entry name" value="KH-II_30S_S3"/>
    <property type="match status" value="1"/>
</dbReference>
<dbReference type="FunFam" id="3.30.1140.32:FF:000001">
    <property type="entry name" value="30S ribosomal protein S3"/>
    <property type="match status" value="1"/>
</dbReference>
<dbReference type="FunFam" id="3.30.300.20:FF:000001">
    <property type="entry name" value="30S ribosomal protein S3"/>
    <property type="match status" value="1"/>
</dbReference>
<dbReference type="Gene3D" id="3.30.300.20">
    <property type="match status" value="1"/>
</dbReference>
<dbReference type="Gene3D" id="3.30.1140.32">
    <property type="entry name" value="Ribosomal protein S3, C-terminal domain"/>
    <property type="match status" value="1"/>
</dbReference>
<dbReference type="HAMAP" id="MF_01309_B">
    <property type="entry name" value="Ribosomal_uS3_B"/>
    <property type="match status" value="1"/>
</dbReference>
<dbReference type="InterPro" id="IPR004087">
    <property type="entry name" value="KH_dom"/>
</dbReference>
<dbReference type="InterPro" id="IPR015946">
    <property type="entry name" value="KH_dom-like_a/b"/>
</dbReference>
<dbReference type="InterPro" id="IPR004044">
    <property type="entry name" value="KH_dom_type_2"/>
</dbReference>
<dbReference type="InterPro" id="IPR009019">
    <property type="entry name" value="KH_sf_prok-type"/>
</dbReference>
<dbReference type="InterPro" id="IPR036419">
    <property type="entry name" value="Ribosomal_S3_C_sf"/>
</dbReference>
<dbReference type="InterPro" id="IPR005704">
    <property type="entry name" value="Ribosomal_uS3_bac-typ"/>
</dbReference>
<dbReference type="InterPro" id="IPR001351">
    <property type="entry name" value="Ribosomal_uS3_C"/>
</dbReference>
<dbReference type="InterPro" id="IPR018280">
    <property type="entry name" value="Ribosomal_uS3_CS"/>
</dbReference>
<dbReference type="NCBIfam" id="TIGR01009">
    <property type="entry name" value="rpsC_bact"/>
    <property type="match status" value="1"/>
</dbReference>
<dbReference type="PANTHER" id="PTHR11760">
    <property type="entry name" value="30S/40S RIBOSOMAL PROTEIN S3"/>
    <property type="match status" value="1"/>
</dbReference>
<dbReference type="PANTHER" id="PTHR11760:SF19">
    <property type="entry name" value="SMALL RIBOSOMAL SUBUNIT PROTEIN US3C"/>
    <property type="match status" value="1"/>
</dbReference>
<dbReference type="Pfam" id="PF07650">
    <property type="entry name" value="KH_2"/>
    <property type="match status" value="1"/>
</dbReference>
<dbReference type="Pfam" id="PF00189">
    <property type="entry name" value="Ribosomal_S3_C"/>
    <property type="match status" value="1"/>
</dbReference>
<dbReference type="SMART" id="SM00322">
    <property type="entry name" value="KH"/>
    <property type="match status" value="1"/>
</dbReference>
<dbReference type="SUPFAM" id="SSF54814">
    <property type="entry name" value="Prokaryotic type KH domain (KH-domain type II)"/>
    <property type="match status" value="1"/>
</dbReference>
<dbReference type="SUPFAM" id="SSF54821">
    <property type="entry name" value="Ribosomal protein S3 C-terminal domain"/>
    <property type="match status" value="1"/>
</dbReference>
<dbReference type="PROSITE" id="PS50823">
    <property type="entry name" value="KH_TYPE_2"/>
    <property type="match status" value="1"/>
</dbReference>
<dbReference type="PROSITE" id="PS00548">
    <property type="entry name" value="RIBOSOMAL_S3"/>
    <property type="match status" value="1"/>
</dbReference>
<accession>B9DSV6</accession>
<name>RS3_STRU0</name>
<evidence type="ECO:0000255" key="1">
    <source>
        <dbReference type="HAMAP-Rule" id="MF_01309"/>
    </source>
</evidence>
<evidence type="ECO:0000305" key="2"/>
<keyword id="KW-1185">Reference proteome</keyword>
<keyword id="KW-0687">Ribonucleoprotein</keyword>
<keyword id="KW-0689">Ribosomal protein</keyword>
<keyword id="KW-0694">RNA-binding</keyword>
<keyword id="KW-0699">rRNA-binding</keyword>
<comment type="function">
    <text evidence="1">Binds the lower part of the 30S subunit head. Binds mRNA in the 70S ribosome, positioning it for translation.</text>
</comment>
<comment type="subunit">
    <text evidence="1">Part of the 30S ribosomal subunit. Forms a tight complex with proteins S10 and S14.</text>
</comment>
<comment type="similarity">
    <text evidence="1">Belongs to the universal ribosomal protein uS3 family.</text>
</comment>
<sequence>MGQKVHPIGMRVGIIRDWDAKWYAEKEYADYLHEDLAIRKFIQKELAEASVSTIEIERAINKVIVSLHTAKPGMVIGKGGANVDALRAQLNKLTGKQVHINIIEIKSPDLDAHLVGENIARQLEQRVAFRRAQKQAIQRTMRAGAKGIKTQVSGRLNGADIARAEGYSEGTVPLHTLRADIDYAWEEADTTYGKLGVKVWIYRGEVLPARKNTKGGK</sequence>
<feature type="chain" id="PRO_1000165514" description="Small ribosomal subunit protein uS3">
    <location>
        <begin position="1"/>
        <end position="217"/>
    </location>
</feature>
<feature type="domain" description="KH type-2" evidence="1">
    <location>
        <begin position="38"/>
        <end position="106"/>
    </location>
</feature>
<gene>
    <name evidence="1" type="primary">rpsC</name>
    <name type="ordered locus">SUB0074</name>
</gene>
<reference key="1">
    <citation type="journal article" date="2009" name="BMC Genomics">
        <title>Evidence for niche adaptation in the genome of the bovine pathogen Streptococcus uberis.</title>
        <authorList>
            <person name="Ward P.N."/>
            <person name="Holden M.T.G."/>
            <person name="Leigh J.A."/>
            <person name="Lennard N."/>
            <person name="Bignell A."/>
            <person name="Barron A."/>
            <person name="Clark L."/>
            <person name="Quail M.A."/>
            <person name="Woodward J."/>
            <person name="Barrell B.G."/>
            <person name="Egan S.A."/>
            <person name="Field T.R."/>
            <person name="Maskell D."/>
            <person name="Kehoe M."/>
            <person name="Dowson C.G."/>
            <person name="Chanter N."/>
            <person name="Whatmore A.M."/>
            <person name="Bentley S.D."/>
            <person name="Parkhill J."/>
        </authorList>
    </citation>
    <scope>NUCLEOTIDE SEQUENCE [LARGE SCALE GENOMIC DNA]</scope>
    <source>
        <strain>ATCC BAA-854 / 0140J</strain>
    </source>
</reference>